<dbReference type="EC" id="7.1.1.-" evidence="1"/>
<dbReference type="EMBL" id="CP000075">
    <property type="protein sequence ID" value="AAY38236.1"/>
    <property type="molecule type" value="Genomic_DNA"/>
</dbReference>
<dbReference type="RefSeq" id="WP_003405112.1">
    <property type="nucleotide sequence ID" value="NC_007005.1"/>
</dbReference>
<dbReference type="RefSeq" id="YP_236274.1">
    <property type="nucleotide sequence ID" value="NC_007005.1"/>
</dbReference>
<dbReference type="SMR" id="Q4ZRI6"/>
<dbReference type="STRING" id="205918.Psyr_3204"/>
<dbReference type="KEGG" id="psb:Psyr_3204"/>
<dbReference type="PATRIC" id="fig|205918.7.peg.3271"/>
<dbReference type="eggNOG" id="COG1143">
    <property type="taxonomic scope" value="Bacteria"/>
</dbReference>
<dbReference type="HOGENOM" id="CLU_067218_4_3_6"/>
<dbReference type="OrthoDB" id="9808559at2"/>
<dbReference type="Proteomes" id="UP000000426">
    <property type="component" value="Chromosome"/>
</dbReference>
<dbReference type="GO" id="GO:0005886">
    <property type="term" value="C:plasma membrane"/>
    <property type="evidence" value="ECO:0007669"/>
    <property type="project" value="UniProtKB-SubCell"/>
</dbReference>
<dbReference type="GO" id="GO:0051539">
    <property type="term" value="F:4 iron, 4 sulfur cluster binding"/>
    <property type="evidence" value="ECO:0007669"/>
    <property type="project" value="UniProtKB-KW"/>
</dbReference>
<dbReference type="GO" id="GO:0005506">
    <property type="term" value="F:iron ion binding"/>
    <property type="evidence" value="ECO:0007669"/>
    <property type="project" value="UniProtKB-UniRule"/>
</dbReference>
<dbReference type="GO" id="GO:0050136">
    <property type="term" value="F:NADH:ubiquinone reductase (non-electrogenic) activity"/>
    <property type="evidence" value="ECO:0007669"/>
    <property type="project" value="UniProtKB-UniRule"/>
</dbReference>
<dbReference type="GO" id="GO:0048038">
    <property type="term" value="F:quinone binding"/>
    <property type="evidence" value="ECO:0007669"/>
    <property type="project" value="UniProtKB-KW"/>
</dbReference>
<dbReference type="GO" id="GO:0009060">
    <property type="term" value="P:aerobic respiration"/>
    <property type="evidence" value="ECO:0007669"/>
    <property type="project" value="TreeGrafter"/>
</dbReference>
<dbReference type="FunFam" id="3.30.70.3270:FF:000002">
    <property type="entry name" value="NADH-quinone oxidoreductase subunit I"/>
    <property type="match status" value="1"/>
</dbReference>
<dbReference type="Gene3D" id="3.30.70.3270">
    <property type="match status" value="1"/>
</dbReference>
<dbReference type="HAMAP" id="MF_01351">
    <property type="entry name" value="NDH1_NuoI"/>
    <property type="match status" value="1"/>
</dbReference>
<dbReference type="InterPro" id="IPR017896">
    <property type="entry name" value="4Fe4S_Fe-S-bd"/>
</dbReference>
<dbReference type="InterPro" id="IPR017900">
    <property type="entry name" value="4Fe4S_Fe_S_CS"/>
</dbReference>
<dbReference type="InterPro" id="IPR010226">
    <property type="entry name" value="NADH_quinone_OxRdtase_chainI"/>
</dbReference>
<dbReference type="NCBIfam" id="TIGR01971">
    <property type="entry name" value="NuoI"/>
    <property type="match status" value="1"/>
</dbReference>
<dbReference type="NCBIfam" id="NF004536">
    <property type="entry name" value="PRK05888.1-1"/>
    <property type="match status" value="1"/>
</dbReference>
<dbReference type="PANTHER" id="PTHR10849:SF20">
    <property type="entry name" value="NADH DEHYDROGENASE [UBIQUINONE] IRON-SULFUR PROTEIN 8, MITOCHONDRIAL"/>
    <property type="match status" value="1"/>
</dbReference>
<dbReference type="PANTHER" id="PTHR10849">
    <property type="entry name" value="NADH DEHYDROGENASE UBIQUINONE IRON-SULFUR PROTEIN 8, MITOCHONDRIAL"/>
    <property type="match status" value="1"/>
</dbReference>
<dbReference type="Pfam" id="PF12838">
    <property type="entry name" value="Fer4_7"/>
    <property type="match status" value="1"/>
</dbReference>
<dbReference type="SUPFAM" id="SSF54862">
    <property type="entry name" value="4Fe-4S ferredoxins"/>
    <property type="match status" value="1"/>
</dbReference>
<dbReference type="PROSITE" id="PS00198">
    <property type="entry name" value="4FE4S_FER_1"/>
    <property type="match status" value="2"/>
</dbReference>
<dbReference type="PROSITE" id="PS51379">
    <property type="entry name" value="4FE4S_FER_2"/>
    <property type="match status" value="2"/>
</dbReference>
<accession>Q4ZRI6</accession>
<organism>
    <name type="scientific">Pseudomonas syringae pv. syringae (strain B728a)</name>
    <dbReference type="NCBI Taxonomy" id="205918"/>
    <lineage>
        <taxon>Bacteria</taxon>
        <taxon>Pseudomonadati</taxon>
        <taxon>Pseudomonadota</taxon>
        <taxon>Gammaproteobacteria</taxon>
        <taxon>Pseudomonadales</taxon>
        <taxon>Pseudomonadaceae</taxon>
        <taxon>Pseudomonas</taxon>
        <taxon>Pseudomonas syringae</taxon>
    </lineage>
</organism>
<evidence type="ECO:0000255" key="1">
    <source>
        <dbReference type="HAMAP-Rule" id="MF_01351"/>
    </source>
</evidence>
<sequence length="182" mass="20537">MFKYIGDIVKGTGTQLRSMVMVFGHGFRKRDTLQYPEEQVYLPPRYRGRIVLTRDPDGEERCVACNLCAVACPVGCISLQKAETEDGRWYPDFFRINFSRCIFCGLCEEACPTTAIQLTPDFEMAEFKRQDLVYEKEDLLISGPGKNPDYNFYRVAGMAIGGKPKGSAQNEAEPINVKSLLP</sequence>
<comment type="function">
    <text evidence="1">NDH-1 shuttles electrons from NADH, via FMN and iron-sulfur (Fe-S) centers, to quinones in the respiratory chain. The immediate electron acceptor for the enzyme in this species is believed to be ubiquinone. Couples the redox reaction to proton translocation (for every two electrons transferred, four hydrogen ions are translocated across the cytoplasmic membrane), and thus conserves the redox energy in a proton gradient.</text>
</comment>
<comment type="catalytic activity">
    <reaction evidence="1">
        <text>a quinone + NADH + 5 H(+)(in) = a quinol + NAD(+) + 4 H(+)(out)</text>
        <dbReference type="Rhea" id="RHEA:57888"/>
        <dbReference type="ChEBI" id="CHEBI:15378"/>
        <dbReference type="ChEBI" id="CHEBI:24646"/>
        <dbReference type="ChEBI" id="CHEBI:57540"/>
        <dbReference type="ChEBI" id="CHEBI:57945"/>
        <dbReference type="ChEBI" id="CHEBI:132124"/>
    </reaction>
</comment>
<comment type="cofactor">
    <cofactor evidence="1">
        <name>[4Fe-4S] cluster</name>
        <dbReference type="ChEBI" id="CHEBI:49883"/>
    </cofactor>
    <text evidence="1">Binds 2 [4Fe-4S] clusters per subunit.</text>
</comment>
<comment type="subunit">
    <text evidence="1">NDH-1 is composed of 13 different subunits. Subunits NuoA, H, J, K, L, M, N constitute the membrane sector of the complex.</text>
</comment>
<comment type="subcellular location">
    <subcellularLocation>
        <location evidence="1">Cell inner membrane</location>
        <topology evidence="1">Peripheral membrane protein</topology>
    </subcellularLocation>
</comment>
<comment type="similarity">
    <text evidence="1">Belongs to the complex I 23 kDa subunit family.</text>
</comment>
<reference key="1">
    <citation type="journal article" date="2005" name="Proc. Natl. Acad. Sci. U.S.A.">
        <title>Comparison of the complete genome sequences of Pseudomonas syringae pv. syringae B728a and pv. tomato DC3000.</title>
        <authorList>
            <person name="Feil H."/>
            <person name="Feil W.S."/>
            <person name="Chain P."/>
            <person name="Larimer F."/>
            <person name="Dibartolo G."/>
            <person name="Copeland A."/>
            <person name="Lykidis A."/>
            <person name="Trong S."/>
            <person name="Nolan M."/>
            <person name="Goltsman E."/>
            <person name="Thiel J."/>
            <person name="Malfatti S."/>
            <person name="Loper J.E."/>
            <person name="Lapidus A."/>
            <person name="Detter J.C."/>
            <person name="Land M."/>
            <person name="Richardson P.M."/>
            <person name="Kyrpides N.C."/>
            <person name="Ivanova N."/>
            <person name="Lindow S.E."/>
        </authorList>
    </citation>
    <scope>NUCLEOTIDE SEQUENCE [LARGE SCALE GENOMIC DNA]</scope>
    <source>
        <strain>B728a</strain>
    </source>
</reference>
<gene>
    <name evidence="1" type="primary">nuoI</name>
    <name type="ordered locus">Psyr_3204</name>
</gene>
<protein>
    <recommendedName>
        <fullName evidence="1">NADH-quinone oxidoreductase subunit I</fullName>
        <ecNumber evidence="1">7.1.1.-</ecNumber>
    </recommendedName>
    <alternativeName>
        <fullName evidence="1">NADH dehydrogenase I subunit I</fullName>
    </alternativeName>
    <alternativeName>
        <fullName evidence="1">NDH-1 subunit I</fullName>
    </alternativeName>
</protein>
<name>NUOI_PSEU2</name>
<keyword id="KW-0004">4Fe-4S</keyword>
<keyword id="KW-0997">Cell inner membrane</keyword>
<keyword id="KW-1003">Cell membrane</keyword>
<keyword id="KW-0408">Iron</keyword>
<keyword id="KW-0411">Iron-sulfur</keyword>
<keyword id="KW-0472">Membrane</keyword>
<keyword id="KW-0479">Metal-binding</keyword>
<keyword id="KW-0520">NAD</keyword>
<keyword id="KW-0874">Quinone</keyword>
<keyword id="KW-0677">Repeat</keyword>
<keyword id="KW-1278">Translocase</keyword>
<keyword id="KW-0830">Ubiquinone</keyword>
<feature type="chain" id="PRO_0000245733" description="NADH-quinone oxidoreductase subunit I">
    <location>
        <begin position="1"/>
        <end position="182"/>
    </location>
</feature>
<feature type="domain" description="4Fe-4S ferredoxin-type 1" evidence="1">
    <location>
        <begin position="52"/>
        <end position="82"/>
    </location>
</feature>
<feature type="domain" description="4Fe-4S ferredoxin-type 2" evidence="1">
    <location>
        <begin position="92"/>
        <end position="121"/>
    </location>
</feature>
<feature type="binding site" evidence="1">
    <location>
        <position position="62"/>
    </location>
    <ligand>
        <name>[4Fe-4S] cluster</name>
        <dbReference type="ChEBI" id="CHEBI:49883"/>
        <label>1</label>
    </ligand>
</feature>
<feature type="binding site" evidence="1">
    <location>
        <position position="65"/>
    </location>
    <ligand>
        <name>[4Fe-4S] cluster</name>
        <dbReference type="ChEBI" id="CHEBI:49883"/>
        <label>1</label>
    </ligand>
</feature>
<feature type="binding site" evidence="1">
    <location>
        <position position="68"/>
    </location>
    <ligand>
        <name>[4Fe-4S] cluster</name>
        <dbReference type="ChEBI" id="CHEBI:49883"/>
        <label>1</label>
    </ligand>
</feature>
<feature type="binding site" evidence="1">
    <location>
        <position position="72"/>
    </location>
    <ligand>
        <name>[4Fe-4S] cluster</name>
        <dbReference type="ChEBI" id="CHEBI:49883"/>
        <label>2</label>
    </ligand>
</feature>
<feature type="binding site" evidence="1">
    <location>
        <position position="101"/>
    </location>
    <ligand>
        <name>[4Fe-4S] cluster</name>
        <dbReference type="ChEBI" id="CHEBI:49883"/>
        <label>2</label>
    </ligand>
</feature>
<feature type="binding site" evidence="1">
    <location>
        <position position="104"/>
    </location>
    <ligand>
        <name>[4Fe-4S] cluster</name>
        <dbReference type="ChEBI" id="CHEBI:49883"/>
        <label>2</label>
    </ligand>
</feature>
<feature type="binding site" evidence="1">
    <location>
        <position position="107"/>
    </location>
    <ligand>
        <name>[4Fe-4S] cluster</name>
        <dbReference type="ChEBI" id="CHEBI:49883"/>
        <label>2</label>
    </ligand>
</feature>
<feature type="binding site" evidence="1">
    <location>
        <position position="111"/>
    </location>
    <ligand>
        <name>[4Fe-4S] cluster</name>
        <dbReference type="ChEBI" id="CHEBI:49883"/>
        <label>1</label>
    </ligand>
</feature>
<proteinExistence type="inferred from homology"/>